<accession>Q6ENB0</accession>
<comment type="function">
    <text evidence="1">NDH shuttles electrons from NAD(P)H:plastoquinone, via FMN and iron-sulfur (Fe-S) centers, to quinones in the photosynthetic chain and possibly in a chloroplast respiratory chain. The immediate electron acceptor for the enzyme in this species is believed to be plastoquinone. Couples the redox reaction to proton translocation, and thus conserves the redox energy in a proton gradient (By similarity).</text>
</comment>
<comment type="catalytic activity">
    <reaction>
        <text>a plastoquinone + NADH + (n+1) H(+)(in) = a plastoquinol + NAD(+) + n H(+)(out)</text>
        <dbReference type="Rhea" id="RHEA:42608"/>
        <dbReference type="Rhea" id="RHEA-COMP:9561"/>
        <dbReference type="Rhea" id="RHEA-COMP:9562"/>
        <dbReference type="ChEBI" id="CHEBI:15378"/>
        <dbReference type="ChEBI" id="CHEBI:17757"/>
        <dbReference type="ChEBI" id="CHEBI:57540"/>
        <dbReference type="ChEBI" id="CHEBI:57945"/>
        <dbReference type="ChEBI" id="CHEBI:62192"/>
    </reaction>
</comment>
<comment type="catalytic activity">
    <reaction>
        <text>a plastoquinone + NADPH + (n+1) H(+)(in) = a plastoquinol + NADP(+) + n H(+)(out)</text>
        <dbReference type="Rhea" id="RHEA:42612"/>
        <dbReference type="Rhea" id="RHEA-COMP:9561"/>
        <dbReference type="Rhea" id="RHEA-COMP:9562"/>
        <dbReference type="ChEBI" id="CHEBI:15378"/>
        <dbReference type="ChEBI" id="CHEBI:17757"/>
        <dbReference type="ChEBI" id="CHEBI:57783"/>
        <dbReference type="ChEBI" id="CHEBI:58349"/>
        <dbReference type="ChEBI" id="CHEBI:62192"/>
    </reaction>
</comment>
<comment type="subunit">
    <text evidence="1">NDH is composed of at least 16 different subunits, 5 of which are encoded in the nucleus.</text>
</comment>
<comment type="subcellular location">
    <subcellularLocation>
        <location evidence="1">Plastid</location>
        <location evidence="1">Chloroplast thylakoid membrane</location>
        <topology evidence="1">Multi-pass membrane protein</topology>
    </subcellularLocation>
</comment>
<comment type="similarity">
    <text evidence="3">Belongs to the complex I subunit 5 family.</text>
</comment>
<protein>
    <recommendedName>
        <fullName>NAD(P)H-quinone oxidoreductase subunit 5, chloroplastic</fullName>
        <ecNumber>7.1.1.-</ecNumber>
    </recommendedName>
    <alternativeName>
        <fullName>NAD(P)H dehydrogenase subunit 5</fullName>
    </alternativeName>
    <alternativeName>
        <fullName>NADH-plastoquinone oxidoreductase subunit 5</fullName>
    </alternativeName>
</protein>
<reference key="1">
    <citation type="journal article" date="2004" name="Gene">
        <title>The complete nucleotide sequence of wild rice (Oryza nivara) chloroplast genome: first genome wide comparative sequence analysis of wild and cultivated rice.</title>
        <authorList>
            <person name="Masood M.S."/>
            <person name="Nishikawa T."/>
            <person name="Fukuoka S."/>
            <person name="Njenga P.K."/>
            <person name="Tsudzuki T."/>
            <person name="Kadowaki K."/>
        </authorList>
    </citation>
    <scope>NUCLEOTIDE SEQUENCE [LARGE SCALE GENOMIC DNA]</scope>
    <source>
        <strain evidence="4">cv. SL10</strain>
    </source>
</reference>
<geneLocation type="chloroplast"/>
<feature type="chain" id="PRO_0000118197" description="NAD(P)H-quinone oxidoreductase subunit 5, chloroplastic">
    <location>
        <begin position="1"/>
        <end position="734"/>
    </location>
</feature>
<feature type="transmembrane region" description="Helical" evidence="2">
    <location>
        <begin position="9"/>
        <end position="29"/>
    </location>
</feature>
<feature type="transmembrane region" description="Helical" evidence="2">
    <location>
        <begin position="39"/>
        <end position="59"/>
    </location>
</feature>
<feature type="transmembrane region" description="Helical" evidence="2">
    <location>
        <begin position="89"/>
        <end position="109"/>
    </location>
</feature>
<feature type="transmembrane region" description="Helical" evidence="2">
    <location>
        <begin position="125"/>
        <end position="145"/>
    </location>
</feature>
<feature type="transmembrane region" description="Helical" evidence="2">
    <location>
        <begin position="147"/>
        <end position="167"/>
    </location>
</feature>
<feature type="transmembrane region" description="Helical" evidence="2">
    <location>
        <begin position="185"/>
        <end position="205"/>
    </location>
</feature>
<feature type="transmembrane region" description="Helical" evidence="2">
    <location>
        <begin position="224"/>
        <end position="244"/>
    </location>
</feature>
<feature type="transmembrane region" description="Helical" evidence="2">
    <location>
        <begin position="258"/>
        <end position="278"/>
    </location>
</feature>
<feature type="transmembrane region" description="Helical" evidence="2">
    <location>
        <begin position="280"/>
        <end position="300"/>
    </location>
</feature>
<feature type="transmembrane region" description="Helical" evidence="2">
    <location>
        <begin position="327"/>
        <end position="347"/>
    </location>
</feature>
<feature type="transmembrane region" description="Helical" evidence="2">
    <location>
        <begin position="354"/>
        <end position="374"/>
    </location>
</feature>
<feature type="transmembrane region" description="Helical" evidence="2">
    <location>
        <begin position="396"/>
        <end position="416"/>
    </location>
</feature>
<feature type="transmembrane region" description="Helical" evidence="2">
    <location>
        <begin position="425"/>
        <end position="445"/>
    </location>
</feature>
<feature type="transmembrane region" description="Helical" evidence="2">
    <location>
        <begin position="542"/>
        <end position="562"/>
    </location>
</feature>
<feature type="transmembrane region" description="Helical" evidence="2">
    <location>
        <begin position="605"/>
        <end position="625"/>
    </location>
</feature>
<feature type="transmembrane region" description="Helical" evidence="2">
    <location>
        <begin position="714"/>
        <end position="734"/>
    </location>
</feature>
<sequence length="734" mass="82527">MEHTYQYAWVIPLLPLPVIMSMGFGLFLVPTATKNLRRIWAFPSVLLLSIAMVFSVHLSIQQINGSSIYQYLWSWTVNNDFSLEFGYLIDPLTSIMLILITTVGILVLIYSDDYMSHDEGYLRFFVYISFFNTSMLGLVTSSNLIQIYFFWELVGMCSYLLIGFWFTRPIAASACQKAFVTNRVGDFGLLLGILGFFWITGSLEFRDLFKIANNWIPNNEINSLLTILCAFLLFLGAVAKSAQFPLHVWLPDAMEGPTPISALIHAATMVAAGIFLIARLLPLFISLPLIMSFISLIGTLTLFLGATLALAQRDIKRSLAYSTMSQLGYMMLALGIGSYQAALFHLITHAYSKALLFLGSGSVIHSMEPLVGYSPDKSQNMVLMGGLRKYIPITRTCFLWGTLSLCGIPPLACFWSKDEILSNSWLYSPFFGIIASFTAGLTAFYMFRIYLLTFDGYLRVHFQNYSSTKEDSLYSISLWGKRISKGVNRDFVLSTAKSGVSFFSQNLSKIHVNTGNRIGSFSTSLGTKNTFVYPHEPGNTMLFPLLILLLCTLFIGSIGIHFDNEIGELTILSKWLTPSINFFQESSNSSINSYEFITNAISSVSLAIFGLFIAYMFYGSAYSFFQNLDLINSFVKGGPKKYFFHQLKKKIYSWSYNRGYIDIFYTRTFTLGIRGLTELTQFFDKGVIDGITNGVGLASFCIGEEIKYVGGGRISSYLFFFLCYVSVFLFFFLS</sequence>
<keyword id="KW-0150">Chloroplast</keyword>
<keyword id="KW-0472">Membrane</keyword>
<keyword id="KW-0520">NAD</keyword>
<keyword id="KW-0521">NADP</keyword>
<keyword id="KW-0934">Plastid</keyword>
<keyword id="KW-0618">Plastoquinone</keyword>
<keyword id="KW-0874">Quinone</keyword>
<keyword id="KW-1185">Reference proteome</keyword>
<keyword id="KW-0793">Thylakoid</keyword>
<keyword id="KW-1278">Translocase</keyword>
<keyword id="KW-0812">Transmembrane</keyword>
<keyword id="KW-1133">Transmembrane helix</keyword>
<keyword id="KW-0813">Transport</keyword>
<gene>
    <name type="primary">ndhF</name>
</gene>
<evidence type="ECO:0000250" key="1"/>
<evidence type="ECO:0000255" key="2"/>
<evidence type="ECO:0000305" key="3"/>
<evidence type="ECO:0000312" key="4">
    <source>
        <dbReference type="Proteomes" id="UP000006591"/>
    </source>
</evidence>
<dbReference type="EC" id="7.1.1.-"/>
<dbReference type="EMBL" id="AP006728">
    <property type="protein sequence ID" value="BAD26842.1"/>
    <property type="molecule type" value="Genomic_DNA"/>
</dbReference>
<dbReference type="RefSeq" id="YP_052812.1">
    <property type="nucleotide sequence ID" value="NC_005973.1"/>
</dbReference>
<dbReference type="SMR" id="Q6ENB0"/>
<dbReference type="STRING" id="4536.Q6ENB0"/>
<dbReference type="GeneID" id="2885910"/>
<dbReference type="eggNOG" id="KOG4668">
    <property type="taxonomic scope" value="Eukaryota"/>
</dbReference>
<dbReference type="Proteomes" id="UP000006591">
    <property type="component" value="Chloroplast"/>
</dbReference>
<dbReference type="GO" id="GO:0009535">
    <property type="term" value="C:chloroplast thylakoid membrane"/>
    <property type="evidence" value="ECO:0007669"/>
    <property type="project" value="UniProtKB-SubCell"/>
</dbReference>
<dbReference type="GO" id="GO:0009536">
    <property type="term" value="C:plastid"/>
    <property type="evidence" value="ECO:0000305"/>
    <property type="project" value="Gramene"/>
</dbReference>
<dbReference type="GO" id="GO:0008137">
    <property type="term" value="F:NADH dehydrogenase (ubiquinone) activity"/>
    <property type="evidence" value="ECO:0007669"/>
    <property type="project" value="InterPro"/>
</dbReference>
<dbReference type="GO" id="GO:0048038">
    <property type="term" value="F:quinone binding"/>
    <property type="evidence" value="ECO:0007669"/>
    <property type="project" value="UniProtKB-KW"/>
</dbReference>
<dbReference type="GO" id="GO:0042773">
    <property type="term" value="P:ATP synthesis coupled electron transport"/>
    <property type="evidence" value="ECO:0007669"/>
    <property type="project" value="InterPro"/>
</dbReference>
<dbReference type="GO" id="GO:0015990">
    <property type="term" value="P:electron transport coupled proton transport"/>
    <property type="evidence" value="ECO:0007669"/>
    <property type="project" value="TreeGrafter"/>
</dbReference>
<dbReference type="Gene3D" id="1.20.5.2700">
    <property type="match status" value="1"/>
</dbReference>
<dbReference type="InterPro" id="IPR002128">
    <property type="entry name" value="NADH_UbQ_OxRdtase_chlpt_su5_C"/>
</dbReference>
<dbReference type="InterPro" id="IPR018393">
    <property type="entry name" value="NADHpl_OxRdtase_5_subgr"/>
</dbReference>
<dbReference type="InterPro" id="IPR001750">
    <property type="entry name" value="ND/Mrp_TM"/>
</dbReference>
<dbReference type="InterPro" id="IPR003945">
    <property type="entry name" value="NU5C-like"/>
</dbReference>
<dbReference type="InterPro" id="IPR001516">
    <property type="entry name" value="Proton_antipo_N"/>
</dbReference>
<dbReference type="NCBIfam" id="TIGR01974">
    <property type="entry name" value="NDH_I_L"/>
    <property type="match status" value="1"/>
</dbReference>
<dbReference type="NCBIfam" id="NF005141">
    <property type="entry name" value="PRK06590.1"/>
    <property type="match status" value="1"/>
</dbReference>
<dbReference type="PANTHER" id="PTHR42829">
    <property type="entry name" value="NADH-UBIQUINONE OXIDOREDUCTASE CHAIN 5"/>
    <property type="match status" value="1"/>
</dbReference>
<dbReference type="PANTHER" id="PTHR42829:SF2">
    <property type="entry name" value="NADH-UBIQUINONE OXIDOREDUCTASE CHAIN 5"/>
    <property type="match status" value="1"/>
</dbReference>
<dbReference type="Pfam" id="PF01010">
    <property type="entry name" value="Proton_antipo_C"/>
    <property type="match status" value="1"/>
</dbReference>
<dbReference type="Pfam" id="PF00361">
    <property type="entry name" value="Proton_antipo_M"/>
    <property type="match status" value="1"/>
</dbReference>
<dbReference type="Pfam" id="PF00662">
    <property type="entry name" value="Proton_antipo_N"/>
    <property type="match status" value="1"/>
</dbReference>
<dbReference type="PRINTS" id="PR01434">
    <property type="entry name" value="NADHDHGNASE5"/>
</dbReference>
<dbReference type="PRINTS" id="PR01435">
    <property type="entry name" value="NPOXDRDTASE5"/>
</dbReference>
<organism>
    <name type="scientific">Oryza nivara</name>
    <name type="common">Indian wild rice</name>
    <name type="synonym">Oryza sativa f. spontanea</name>
    <dbReference type="NCBI Taxonomy" id="4536"/>
    <lineage>
        <taxon>Eukaryota</taxon>
        <taxon>Viridiplantae</taxon>
        <taxon>Streptophyta</taxon>
        <taxon>Embryophyta</taxon>
        <taxon>Tracheophyta</taxon>
        <taxon>Spermatophyta</taxon>
        <taxon>Magnoliopsida</taxon>
        <taxon>Liliopsida</taxon>
        <taxon>Poales</taxon>
        <taxon>Poaceae</taxon>
        <taxon>BOP clade</taxon>
        <taxon>Oryzoideae</taxon>
        <taxon>Oryzeae</taxon>
        <taxon>Oryzinae</taxon>
        <taxon>Oryza</taxon>
    </lineage>
</organism>
<name>NU5C_ORYNI</name>
<proteinExistence type="inferred from homology"/>